<accession>Q6R518</accession>
<dbReference type="EMBL" id="AY513752">
    <property type="protein sequence ID" value="AAR99706.1"/>
    <property type="molecule type" value="mRNA"/>
</dbReference>
<dbReference type="RefSeq" id="NP_973720.1">
    <property type="nucleotide sequence ID" value="NM_201991.1"/>
</dbReference>
<dbReference type="SMR" id="Q6R518"/>
<dbReference type="FunCoup" id="Q6R518">
    <property type="interactions" value="3041"/>
</dbReference>
<dbReference type="STRING" id="10116.ENSRNOP00000001722"/>
<dbReference type="PhosphoSitePlus" id="Q6R518"/>
<dbReference type="jPOST" id="Q6R518"/>
<dbReference type="PaxDb" id="10116-ENSRNOP00000001722"/>
<dbReference type="GeneID" id="360810"/>
<dbReference type="KEGG" id="rno:360810"/>
<dbReference type="UCSC" id="RGD:1303034">
    <property type="organism name" value="rat"/>
</dbReference>
<dbReference type="AGR" id="RGD:1303034"/>
<dbReference type="CTD" id="51184"/>
<dbReference type="RGD" id="1303034">
    <property type="gene designation" value="Gpn3"/>
</dbReference>
<dbReference type="eggNOG" id="KOG1534">
    <property type="taxonomic scope" value="Eukaryota"/>
</dbReference>
<dbReference type="InParanoid" id="Q6R518"/>
<dbReference type="PhylomeDB" id="Q6R518"/>
<dbReference type="PRO" id="PR:Q6R518"/>
<dbReference type="Proteomes" id="UP000002494">
    <property type="component" value="Unplaced"/>
</dbReference>
<dbReference type="GO" id="GO:0005525">
    <property type="term" value="F:GTP binding"/>
    <property type="evidence" value="ECO:0007669"/>
    <property type="project" value="UniProtKB-KW"/>
</dbReference>
<dbReference type="GO" id="GO:0003924">
    <property type="term" value="F:GTPase activity"/>
    <property type="evidence" value="ECO:0000318"/>
    <property type="project" value="GO_Central"/>
</dbReference>
<dbReference type="CDD" id="cd17872">
    <property type="entry name" value="GPN3"/>
    <property type="match status" value="1"/>
</dbReference>
<dbReference type="FunFam" id="3.40.50.300:FF:000616">
    <property type="entry name" value="GPN-loop GTPase 3"/>
    <property type="match status" value="1"/>
</dbReference>
<dbReference type="Gene3D" id="3.40.50.300">
    <property type="entry name" value="P-loop containing nucleotide triphosphate hydrolases"/>
    <property type="match status" value="1"/>
</dbReference>
<dbReference type="InterPro" id="IPR004130">
    <property type="entry name" value="Gpn"/>
</dbReference>
<dbReference type="InterPro" id="IPR030228">
    <property type="entry name" value="Gpn3"/>
</dbReference>
<dbReference type="InterPro" id="IPR027417">
    <property type="entry name" value="P-loop_NTPase"/>
</dbReference>
<dbReference type="PANTHER" id="PTHR21231:SF7">
    <property type="entry name" value="GPN-LOOP GTPASE 3"/>
    <property type="match status" value="1"/>
</dbReference>
<dbReference type="PANTHER" id="PTHR21231">
    <property type="entry name" value="XPA-BINDING PROTEIN 1-RELATED"/>
    <property type="match status" value="1"/>
</dbReference>
<dbReference type="Pfam" id="PF03029">
    <property type="entry name" value="ATP_bind_1"/>
    <property type="match status" value="1"/>
</dbReference>
<dbReference type="SUPFAM" id="SSF52540">
    <property type="entry name" value="P-loop containing nucleoside triphosphate hydrolases"/>
    <property type="match status" value="1"/>
</dbReference>
<reference key="1">
    <citation type="submission" date="2003-12" db="EMBL/GenBank/DDBJ databases">
        <authorList>
            <person name="Zhou G."/>
            <person name="Li W."/>
            <person name="Zhao S."/>
        </authorList>
    </citation>
    <scope>NUCLEOTIDE SEQUENCE [MRNA]</scope>
    <source>
        <strain>Wistar</strain>
    </source>
</reference>
<keyword id="KW-0342">GTP-binding</keyword>
<keyword id="KW-0378">Hydrolase</keyword>
<keyword id="KW-0547">Nucleotide-binding</keyword>
<keyword id="KW-1185">Reference proteome</keyword>
<evidence type="ECO:0000250" key="1">
    <source>
        <dbReference type="UniProtKB" id="Q9UHW5"/>
    </source>
</evidence>
<evidence type="ECO:0000250" key="2">
    <source>
        <dbReference type="UniProtKB" id="Q9UYR9"/>
    </source>
</evidence>
<evidence type="ECO:0000256" key="3">
    <source>
        <dbReference type="SAM" id="MobiDB-lite"/>
    </source>
</evidence>
<evidence type="ECO:0000305" key="4"/>
<gene>
    <name evidence="1" type="primary">Gpn3</name>
    <name evidence="1" type="synonym">Atpbd1c</name>
</gene>
<sequence length="284" mass="32802">MPRYAQLVMGPAGSGKSTYCSTMVQHCEALNRSVQVVNLDPAAEHFNYPVMADIRELIEVDDVMEDDSLRFGPNGGLVFCMEYFANNFDWLENCLGHVEDDYILFDCPGQIELYTHLPVMKQLVQQLEQWEFRVCGVFLVDSQFMVESFKFISGILAALSAMISLEIPQVNIMTKMDLLSKKAKKEIEKFLDPDMYSLLEDSTGDLRSQKFKKLTKPVCGLVDDYSMVRFLPYDQSDEESMNIVLQHIDFAIQYGEDLEFKEPKEHEEESSSMFDEYFQERQNE</sequence>
<proteinExistence type="evidence at transcript level"/>
<feature type="chain" id="PRO_0000304792" description="GPN-loop GTPase 3">
    <location>
        <begin position="1"/>
        <end position="284"/>
    </location>
</feature>
<feature type="region of interest" description="Disordered" evidence="3">
    <location>
        <begin position="261"/>
        <end position="284"/>
    </location>
</feature>
<feature type="short sequence motif" description="Gly-Pro-Asn (GPN)-loop; involved in dimer interface" evidence="2">
    <location>
        <begin position="72"/>
        <end position="74"/>
    </location>
</feature>
<feature type="binding site" evidence="2">
    <location>
        <begin position="13"/>
        <end position="18"/>
    </location>
    <ligand>
        <name>GTP</name>
        <dbReference type="ChEBI" id="CHEBI:37565"/>
    </ligand>
</feature>
<feature type="binding site" evidence="2">
    <location>
        <begin position="174"/>
        <end position="177"/>
    </location>
    <ligand>
        <name>GTP</name>
        <dbReference type="ChEBI" id="CHEBI:37565"/>
    </ligand>
</feature>
<feature type="site" description="Stabilizes the phosphate intermediate; shared with dimeric partner" evidence="2">
    <location>
        <position position="74"/>
    </location>
</feature>
<protein>
    <recommendedName>
        <fullName evidence="1">GPN-loop GTPase 3</fullName>
    </recommendedName>
    <alternativeName>
        <fullName evidence="1">ATP-binding domain 1 family member C</fullName>
    </alternativeName>
</protein>
<name>GPN3_RAT</name>
<organism>
    <name type="scientific">Rattus norvegicus</name>
    <name type="common">Rat</name>
    <dbReference type="NCBI Taxonomy" id="10116"/>
    <lineage>
        <taxon>Eukaryota</taxon>
        <taxon>Metazoa</taxon>
        <taxon>Chordata</taxon>
        <taxon>Craniata</taxon>
        <taxon>Vertebrata</taxon>
        <taxon>Euteleostomi</taxon>
        <taxon>Mammalia</taxon>
        <taxon>Eutheria</taxon>
        <taxon>Euarchontoglires</taxon>
        <taxon>Glires</taxon>
        <taxon>Rodentia</taxon>
        <taxon>Myomorpha</taxon>
        <taxon>Muroidea</taxon>
        <taxon>Muridae</taxon>
        <taxon>Murinae</taxon>
        <taxon>Rattus</taxon>
    </lineage>
</organism>
<comment type="function">
    <text evidence="1">Small GTPase required for proper localization of RNA polymerase II (RNAPII). May act at an RNAP assembly step prior to nuclear import.</text>
</comment>
<comment type="subunit">
    <text evidence="1">Heterodimer with GPN1. Binds to RNA polymerase II (RNAPII). Interacts directly with subunits RPB4 and RPB7 and the CTD of RPB1.</text>
</comment>
<comment type="similarity">
    <text evidence="4">Belongs to the GPN-loop GTPase family.</text>
</comment>